<reference key="1">
    <citation type="journal article" date="2007" name="BMC Plant Biol.">
        <title>Complete plastid genome sequences suggest strong selection for retention of photosynthetic genes in the parasitic plant genus Cuscuta.</title>
        <authorList>
            <person name="McNeal J.R."/>
            <person name="Kuehl J.V."/>
            <person name="Boore J.L."/>
            <person name="dePamphilis C.W."/>
        </authorList>
    </citation>
    <scope>NUCLEOTIDE SEQUENCE [LARGE SCALE GENOMIC DNA]</scope>
</reference>
<feature type="chain" id="PRO_0000323359" description="Small ribosomal subunit protein uS11c">
    <location>
        <begin position="1"/>
        <end position="138"/>
    </location>
</feature>
<feature type="region of interest" description="Disordered" evidence="2">
    <location>
        <begin position="1"/>
        <end position="22"/>
    </location>
</feature>
<keyword id="KW-0934">Plastid</keyword>
<keyword id="KW-0687">Ribonucleoprotein</keyword>
<keyword id="KW-0689">Ribosomal protein</keyword>
<keyword id="KW-0694">RNA-binding</keyword>
<keyword id="KW-0699">rRNA-binding</keyword>
<dbReference type="EMBL" id="EU189132">
    <property type="protein sequence ID" value="ABW83725.1"/>
    <property type="molecule type" value="Genomic_DNA"/>
</dbReference>
<dbReference type="RefSeq" id="YP_001542561.1">
    <property type="nucleotide sequence ID" value="NC_009963.1"/>
</dbReference>
<dbReference type="SMR" id="A8W3F4"/>
<dbReference type="GeneID" id="5729629"/>
<dbReference type="GO" id="GO:0009536">
    <property type="term" value="C:plastid"/>
    <property type="evidence" value="ECO:0007669"/>
    <property type="project" value="UniProtKB-SubCell"/>
</dbReference>
<dbReference type="GO" id="GO:1990904">
    <property type="term" value="C:ribonucleoprotein complex"/>
    <property type="evidence" value="ECO:0007669"/>
    <property type="project" value="UniProtKB-KW"/>
</dbReference>
<dbReference type="GO" id="GO:0005840">
    <property type="term" value="C:ribosome"/>
    <property type="evidence" value="ECO:0007669"/>
    <property type="project" value="UniProtKB-KW"/>
</dbReference>
<dbReference type="GO" id="GO:0019843">
    <property type="term" value="F:rRNA binding"/>
    <property type="evidence" value="ECO:0007669"/>
    <property type="project" value="UniProtKB-KW"/>
</dbReference>
<dbReference type="GO" id="GO:0003735">
    <property type="term" value="F:structural constituent of ribosome"/>
    <property type="evidence" value="ECO:0007669"/>
    <property type="project" value="InterPro"/>
</dbReference>
<dbReference type="GO" id="GO:0006412">
    <property type="term" value="P:translation"/>
    <property type="evidence" value="ECO:0007669"/>
    <property type="project" value="InterPro"/>
</dbReference>
<dbReference type="FunFam" id="3.30.420.80:FF:000003">
    <property type="entry name" value="30S ribosomal protein S11, chloroplastic"/>
    <property type="match status" value="1"/>
</dbReference>
<dbReference type="Gene3D" id="3.30.420.80">
    <property type="entry name" value="Ribosomal protein S11"/>
    <property type="match status" value="1"/>
</dbReference>
<dbReference type="HAMAP" id="MF_01310">
    <property type="entry name" value="Ribosomal_uS11"/>
    <property type="match status" value="1"/>
</dbReference>
<dbReference type="InterPro" id="IPR001971">
    <property type="entry name" value="Ribosomal_uS11"/>
</dbReference>
<dbReference type="InterPro" id="IPR019981">
    <property type="entry name" value="Ribosomal_uS11_bac-type"/>
</dbReference>
<dbReference type="InterPro" id="IPR018102">
    <property type="entry name" value="Ribosomal_uS11_CS"/>
</dbReference>
<dbReference type="InterPro" id="IPR036967">
    <property type="entry name" value="Ribosomal_uS11_sf"/>
</dbReference>
<dbReference type="NCBIfam" id="NF003698">
    <property type="entry name" value="PRK05309.1"/>
    <property type="match status" value="1"/>
</dbReference>
<dbReference type="NCBIfam" id="TIGR03632">
    <property type="entry name" value="uS11_bact"/>
    <property type="match status" value="1"/>
</dbReference>
<dbReference type="PANTHER" id="PTHR11759">
    <property type="entry name" value="40S RIBOSOMAL PROTEIN S14/30S RIBOSOMAL PROTEIN S11"/>
    <property type="match status" value="1"/>
</dbReference>
<dbReference type="Pfam" id="PF00411">
    <property type="entry name" value="Ribosomal_S11"/>
    <property type="match status" value="1"/>
</dbReference>
<dbReference type="PIRSF" id="PIRSF002131">
    <property type="entry name" value="Ribosomal_S11"/>
    <property type="match status" value="1"/>
</dbReference>
<dbReference type="SUPFAM" id="SSF53137">
    <property type="entry name" value="Translational machinery components"/>
    <property type="match status" value="1"/>
</dbReference>
<dbReference type="PROSITE" id="PS00054">
    <property type="entry name" value="RIBOSOMAL_S11"/>
    <property type="match status" value="1"/>
</dbReference>
<proteinExistence type="inferred from homology"/>
<sequence length="138" mass="14845">MAKSIPRISSRRNGPIGSGKTVRRIPKGVIHVQASFHNTIVAVTDVRGRVVSWSSAGTSGFKGTRRGTPFAAQTAATKAIRTVVDQGMLRAEVLIKGPGLGRDAALRAIRRSGILLTFVRDVTPMPHNGCRPPKKRRV</sequence>
<name>RR11_CUSEX</name>
<organism>
    <name type="scientific">Cuscuta exaltata</name>
    <name type="common">Tall dodder</name>
    <dbReference type="NCBI Taxonomy" id="476139"/>
    <lineage>
        <taxon>Eukaryota</taxon>
        <taxon>Viridiplantae</taxon>
        <taxon>Streptophyta</taxon>
        <taxon>Embryophyta</taxon>
        <taxon>Tracheophyta</taxon>
        <taxon>Spermatophyta</taxon>
        <taxon>Magnoliopsida</taxon>
        <taxon>eudicotyledons</taxon>
        <taxon>Gunneridae</taxon>
        <taxon>Pentapetalae</taxon>
        <taxon>asterids</taxon>
        <taxon>lamiids</taxon>
        <taxon>Solanales</taxon>
        <taxon>Convolvulaceae</taxon>
        <taxon>Cuscuteae</taxon>
        <taxon>Cuscuta</taxon>
        <taxon>Cuscuta subgen. Monogynella</taxon>
    </lineage>
</organism>
<evidence type="ECO:0000255" key="1">
    <source>
        <dbReference type="HAMAP-Rule" id="MF_01310"/>
    </source>
</evidence>
<evidence type="ECO:0000256" key="2">
    <source>
        <dbReference type="SAM" id="MobiDB-lite"/>
    </source>
</evidence>
<evidence type="ECO:0000305" key="3"/>
<geneLocation type="plastid"/>
<protein>
    <recommendedName>
        <fullName evidence="3">Small ribosomal subunit protein uS11c</fullName>
    </recommendedName>
    <alternativeName>
        <fullName>Plastid 30S ribosomal protein S11</fullName>
    </alternativeName>
</protein>
<gene>
    <name evidence="1" type="primary">rps11</name>
</gene>
<accession>A8W3F4</accession>
<comment type="subunit">
    <text evidence="1">Part of the 30S ribosomal subunit.</text>
</comment>
<comment type="subcellular location">
    <subcellularLocation>
        <location>Plastid</location>
    </subcellularLocation>
</comment>
<comment type="similarity">
    <text evidence="1">Belongs to the universal ribosomal protein uS11 family.</text>
</comment>
<comment type="caution">
    <text evidence="3">Young tissue from this organism is photosynthetic and contains some thylakoids, although the photosynthetic activity does not exceed the light compensation point.</text>
</comment>